<evidence type="ECO:0000255" key="1">
    <source>
        <dbReference type="HAMAP-Rule" id="MF_00379"/>
    </source>
</evidence>
<proteinExistence type="inferred from homology"/>
<feature type="chain" id="PRO_1000048874" description="tRNA modification GTPase MnmE">
    <location>
        <begin position="1"/>
        <end position="453"/>
    </location>
</feature>
<feature type="domain" description="TrmE-type G">
    <location>
        <begin position="215"/>
        <end position="376"/>
    </location>
</feature>
<feature type="binding site" evidence="1">
    <location>
        <position position="22"/>
    </location>
    <ligand>
        <name>(6S)-5-formyl-5,6,7,8-tetrahydrofolate</name>
        <dbReference type="ChEBI" id="CHEBI:57457"/>
    </ligand>
</feature>
<feature type="binding site" evidence="1">
    <location>
        <position position="79"/>
    </location>
    <ligand>
        <name>(6S)-5-formyl-5,6,7,8-tetrahydrofolate</name>
        <dbReference type="ChEBI" id="CHEBI:57457"/>
    </ligand>
</feature>
<feature type="binding site" evidence="1">
    <location>
        <position position="119"/>
    </location>
    <ligand>
        <name>(6S)-5-formyl-5,6,7,8-tetrahydrofolate</name>
        <dbReference type="ChEBI" id="CHEBI:57457"/>
    </ligand>
</feature>
<feature type="binding site" evidence="1">
    <location>
        <begin position="225"/>
        <end position="230"/>
    </location>
    <ligand>
        <name>GTP</name>
        <dbReference type="ChEBI" id="CHEBI:37565"/>
    </ligand>
</feature>
<feature type="binding site" evidence="1">
    <location>
        <position position="225"/>
    </location>
    <ligand>
        <name>K(+)</name>
        <dbReference type="ChEBI" id="CHEBI:29103"/>
    </ligand>
</feature>
<feature type="binding site" evidence="1">
    <location>
        <position position="229"/>
    </location>
    <ligand>
        <name>Mg(2+)</name>
        <dbReference type="ChEBI" id="CHEBI:18420"/>
    </ligand>
</feature>
<feature type="binding site" evidence="1">
    <location>
        <begin position="244"/>
        <end position="250"/>
    </location>
    <ligand>
        <name>GTP</name>
        <dbReference type="ChEBI" id="CHEBI:37565"/>
    </ligand>
</feature>
<feature type="binding site" evidence="1">
    <location>
        <position position="244"/>
    </location>
    <ligand>
        <name>K(+)</name>
        <dbReference type="ChEBI" id="CHEBI:29103"/>
    </ligand>
</feature>
<feature type="binding site" evidence="1">
    <location>
        <position position="246"/>
    </location>
    <ligand>
        <name>K(+)</name>
        <dbReference type="ChEBI" id="CHEBI:29103"/>
    </ligand>
</feature>
<feature type="binding site" evidence="1">
    <location>
        <position position="249"/>
    </location>
    <ligand>
        <name>K(+)</name>
        <dbReference type="ChEBI" id="CHEBI:29103"/>
    </ligand>
</feature>
<feature type="binding site" evidence="1">
    <location>
        <position position="250"/>
    </location>
    <ligand>
        <name>Mg(2+)</name>
        <dbReference type="ChEBI" id="CHEBI:18420"/>
    </ligand>
</feature>
<feature type="binding site" evidence="1">
    <location>
        <begin position="269"/>
        <end position="272"/>
    </location>
    <ligand>
        <name>GTP</name>
        <dbReference type="ChEBI" id="CHEBI:37565"/>
    </ligand>
</feature>
<feature type="binding site" evidence="1">
    <location>
        <begin position="334"/>
        <end position="337"/>
    </location>
    <ligand>
        <name>GTP</name>
        <dbReference type="ChEBI" id="CHEBI:37565"/>
    </ligand>
</feature>
<feature type="binding site" evidence="1">
    <location>
        <position position="453"/>
    </location>
    <ligand>
        <name>(6S)-5-formyl-5,6,7,8-tetrahydrofolate</name>
        <dbReference type="ChEBI" id="CHEBI:57457"/>
    </ligand>
</feature>
<name>MNME_SHEFN</name>
<gene>
    <name evidence="1" type="primary">mnmE</name>
    <name evidence="1" type="synonym">trmE</name>
    <name type="ordered locus">Sfri_4062</name>
</gene>
<accession>Q07VS7</accession>
<reference key="1">
    <citation type="submission" date="2006-08" db="EMBL/GenBank/DDBJ databases">
        <title>Complete sequence of Shewanella frigidimarina NCIMB 400.</title>
        <authorList>
            <consortium name="US DOE Joint Genome Institute"/>
            <person name="Copeland A."/>
            <person name="Lucas S."/>
            <person name="Lapidus A."/>
            <person name="Barry K."/>
            <person name="Detter J.C."/>
            <person name="Glavina del Rio T."/>
            <person name="Hammon N."/>
            <person name="Israni S."/>
            <person name="Dalin E."/>
            <person name="Tice H."/>
            <person name="Pitluck S."/>
            <person name="Fredrickson J.K."/>
            <person name="Kolker E."/>
            <person name="McCuel L.A."/>
            <person name="DiChristina T."/>
            <person name="Nealson K.H."/>
            <person name="Newman D."/>
            <person name="Tiedje J.M."/>
            <person name="Zhou J."/>
            <person name="Romine M.F."/>
            <person name="Culley D.E."/>
            <person name="Serres M."/>
            <person name="Chertkov O."/>
            <person name="Brettin T."/>
            <person name="Bruce D."/>
            <person name="Han C."/>
            <person name="Tapia R."/>
            <person name="Gilna P."/>
            <person name="Schmutz J."/>
            <person name="Larimer F."/>
            <person name="Land M."/>
            <person name="Hauser L."/>
            <person name="Kyrpides N."/>
            <person name="Mikhailova N."/>
            <person name="Richardson P."/>
        </authorList>
    </citation>
    <scope>NUCLEOTIDE SEQUENCE [LARGE SCALE GENOMIC DNA]</scope>
    <source>
        <strain>NCIMB 400</strain>
    </source>
</reference>
<dbReference type="EC" id="3.6.-.-" evidence="1"/>
<dbReference type="EMBL" id="CP000447">
    <property type="protein sequence ID" value="ABI73887.1"/>
    <property type="molecule type" value="Genomic_DNA"/>
</dbReference>
<dbReference type="RefSeq" id="WP_011639467.1">
    <property type="nucleotide sequence ID" value="NC_008345.1"/>
</dbReference>
<dbReference type="SMR" id="Q07VS7"/>
<dbReference type="STRING" id="318167.Sfri_4062"/>
<dbReference type="KEGG" id="sfr:Sfri_4062"/>
<dbReference type="eggNOG" id="COG0486">
    <property type="taxonomic scope" value="Bacteria"/>
</dbReference>
<dbReference type="HOGENOM" id="CLU_019624_4_1_6"/>
<dbReference type="OrthoDB" id="9805918at2"/>
<dbReference type="Proteomes" id="UP000000684">
    <property type="component" value="Chromosome"/>
</dbReference>
<dbReference type="GO" id="GO:0005829">
    <property type="term" value="C:cytosol"/>
    <property type="evidence" value="ECO:0007669"/>
    <property type="project" value="TreeGrafter"/>
</dbReference>
<dbReference type="GO" id="GO:0005525">
    <property type="term" value="F:GTP binding"/>
    <property type="evidence" value="ECO:0007669"/>
    <property type="project" value="UniProtKB-UniRule"/>
</dbReference>
<dbReference type="GO" id="GO:0003924">
    <property type="term" value="F:GTPase activity"/>
    <property type="evidence" value="ECO:0007669"/>
    <property type="project" value="UniProtKB-UniRule"/>
</dbReference>
<dbReference type="GO" id="GO:0046872">
    <property type="term" value="F:metal ion binding"/>
    <property type="evidence" value="ECO:0007669"/>
    <property type="project" value="UniProtKB-KW"/>
</dbReference>
<dbReference type="GO" id="GO:0030488">
    <property type="term" value="P:tRNA methylation"/>
    <property type="evidence" value="ECO:0007669"/>
    <property type="project" value="TreeGrafter"/>
</dbReference>
<dbReference type="GO" id="GO:0002098">
    <property type="term" value="P:tRNA wobble uridine modification"/>
    <property type="evidence" value="ECO:0007669"/>
    <property type="project" value="TreeGrafter"/>
</dbReference>
<dbReference type="CDD" id="cd04164">
    <property type="entry name" value="trmE"/>
    <property type="match status" value="1"/>
</dbReference>
<dbReference type="CDD" id="cd14858">
    <property type="entry name" value="TrmE_N"/>
    <property type="match status" value="1"/>
</dbReference>
<dbReference type="FunFam" id="3.30.1360.120:FF:000001">
    <property type="entry name" value="tRNA modification GTPase MnmE"/>
    <property type="match status" value="1"/>
</dbReference>
<dbReference type="FunFam" id="3.40.50.300:FF:000249">
    <property type="entry name" value="tRNA modification GTPase MnmE"/>
    <property type="match status" value="1"/>
</dbReference>
<dbReference type="Gene3D" id="3.40.50.300">
    <property type="entry name" value="P-loop containing nucleotide triphosphate hydrolases"/>
    <property type="match status" value="1"/>
</dbReference>
<dbReference type="Gene3D" id="3.30.1360.120">
    <property type="entry name" value="Probable tRNA modification gtpase trme, domain 1"/>
    <property type="match status" value="1"/>
</dbReference>
<dbReference type="Gene3D" id="1.20.120.430">
    <property type="entry name" value="tRNA modification GTPase MnmE domain 2"/>
    <property type="match status" value="1"/>
</dbReference>
<dbReference type="HAMAP" id="MF_00379">
    <property type="entry name" value="GTPase_MnmE"/>
    <property type="match status" value="1"/>
</dbReference>
<dbReference type="InterPro" id="IPR031168">
    <property type="entry name" value="G_TrmE"/>
</dbReference>
<dbReference type="InterPro" id="IPR006073">
    <property type="entry name" value="GTP-bd"/>
</dbReference>
<dbReference type="InterPro" id="IPR018948">
    <property type="entry name" value="GTP-bd_TrmE_N"/>
</dbReference>
<dbReference type="InterPro" id="IPR004520">
    <property type="entry name" value="GTPase_MnmE"/>
</dbReference>
<dbReference type="InterPro" id="IPR027368">
    <property type="entry name" value="MnmE_dom2"/>
</dbReference>
<dbReference type="InterPro" id="IPR025867">
    <property type="entry name" value="MnmE_helical"/>
</dbReference>
<dbReference type="InterPro" id="IPR027417">
    <property type="entry name" value="P-loop_NTPase"/>
</dbReference>
<dbReference type="InterPro" id="IPR005225">
    <property type="entry name" value="Small_GTP-bd"/>
</dbReference>
<dbReference type="InterPro" id="IPR027266">
    <property type="entry name" value="TrmE/GcvT_dom1"/>
</dbReference>
<dbReference type="NCBIfam" id="TIGR00450">
    <property type="entry name" value="mnmE_trmE_thdF"/>
    <property type="match status" value="1"/>
</dbReference>
<dbReference type="NCBIfam" id="NF003661">
    <property type="entry name" value="PRK05291.1-3"/>
    <property type="match status" value="1"/>
</dbReference>
<dbReference type="NCBIfam" id="TIGR00231">
    <property type="entry name" value="small_GTP"/>
    <property type="match status" value="1"/>
</dbReference>
<dbReference type="PANTHER" id="PTHR42714">
    <property type="entry name" value="TRNA MODIFICATION GTPASE GTPBP3"/>
    <property type="match status" value="1"/>
</dbReference>
<dbReference type="PANTHER" id="PTHR42714:SF2">
    <property type="entry name" value="TRNA MODIFICATION GTPASE GTPBP3, MITOCHONDRIAL"/>
    <property type="match status" value="1"/>
</dbReference>
<dbReference type="Pfam" id="PF01926">
    <property type="entry name" value="MMR_HSR1"/>
    <property type="match status" value="1"/>
</dbReference>
<dbReference type="Pfam" id="PF12631">
    <property type="entry name" value="MnmE_helical"/>
    <property type="match status" value="1"/>
</dbReference>
<dbReference type="Pfam" id="PF10396">
    <property type="entry name" value="TrmE_N"/>
    <property type="match status" value="1"/>
</dbReference>
<dbReference type="SUPFAM" id="SSF52540">
    <property type="entry name" value="P-loop containing nucleoside triphosphate hydrolases"/>
    <property type="match status" value="1"/>
</dbReference>
<dbReference type="SUPFAM" id="SSF116878">
    <property type="entry name" value="TrmE connector domain"/>
    <property type="match status" value="1"/>
</dbReference>
<dbReference type="PROSITE" id="PS51709">
    <property type="entry name" value="G_TRME"/>
    <property type="match status" value="1"/>
</dbReference>
<organism>
    <name type="scientific">Shewanella frigidimarina (strain NCIMB 400)</name>
    <dbReference type="NCBI Taxonomy" id="318167"/>
    <lineage>
        <taxon>Bacteria</taxon>
        <taxon>Pseudomonadati</taxon>
        <taxon>Pseudomonadota</taxon>
        <taxon>Gammaproteobacteria</taxon>
        <taxon>Alteromonadales</taxon>
        <taxon>Shewanellaceae</taxon>
        <taxon>Shewanella</taxon>
    </lineage>
</organism>
<comment type="function">
    <text evidence="1">Exhibits a very high intrinsic GTPase hydrolysis rate. Involved in the addition of a carboxymethylaminomethyl (cmnm) group at the wobble position (U34) of certain tRNAs, forming tRNA-cmnm(5)s(2)U34.</text>
</comment>
<comment type="cofactor">
    <cofactor evidence="1">
        <name>K(+)</name>
        <dbReference type="ChEBI" id="CHEBI:29103"/>
    </cofactor>
    <text evidence="1">Binds 1 potassium ion per subunit.</text>
</comment>
<comment type="subunit">
    <text evidence="1">Homodimer. Heterotetramer of two MnmE and two MnmG subunits.</text>
</comment>
<comment type="subcellular location">
    <subcellularLocation>
        <location evidence="1">Cytoplasm</location>
    </subcellularLocation>
</comment>
<comment type="similarity">
    <text evidence="1">Belongs to the TRAFAC class TrmE-Era-EngA-EngB-Septin-like GTPase superfamily. TrmE GTPase family.</text>
</comment>
<keyword id="KW-0963">Cytoplasm</keyword>
<keyword id="KW-0342">GTP-binding</keyword>
<keyword id="KW-0378">Hydrolase</keyword>
<keyword id="KW-0460">Magnesium</keyword>
<keyword id="KW-0479">Metal-binding</keyword>
<keyword id="KW-0547">Nucleotide-binding</keyword>
<keyword id="KW-0630">Potassium</keyword>
<keyword id="KW-1185">Reference proteome</keyword>
<keyword id="KW-0819">tRNA processing</keyword>
<protein>
    <recommendedName>
        <fullName evidence="1">tRNA modification GTPase MnmE</fullName>
        <ecNumber evidence="1">3.6.-.-</ecNumber>
    </recommendedName>
</protein>
<sequence length="453" mass="49160">MTTDTIVAQATAPGRGGVGIIRISGDLATNVATAIIGHVPKTRYAEYCDFNNADGQVIDQGIALFFKGPNSFTGEDVLELQGHGGQIVLDMLIKRVMEIDGIRIARPGEFSEQAFMNDKLDLTQAEAIADLIDATSEQAAKSALQSLQGEFSKEVHELVDQVTNLRLYVEAAIDFPDEEVDFLSDGKIANALYKIISKLDTVQASAKQGSIIREGMKVVIAGRPNAGKSSLLNALAGKESAIVTEIAGTTRDVLREHIHLDGMPLHIIDTAGLRDTLDTVEQIGIERAWAEIASADRVLFMVDGTTTDAVNPHEIWPDFIDRLPAKLGVTVVRNKADLTGETLDKTEEQGSCVYRISAKTGLGIDELKQHLKSLMGYQSNLEGGFIARRRHLEALELAANHLQLGKEQLEVYLAGELLAEELRMTQMALSEITGKFTSDDLLGKIFGSFCIGK</sequence>